<reference key="1">
    <citation type="submission" date="1998-05" db="EMBL/GenBank/DDBJ databases">
        <title>Unique epithelial Kir7.1 subunit defines a new subfamily of inwardly rectifying potassium channels.</title>
        <authorList>
            <person name="Doering F."/>
            <person name="Derst C."/>
            <person name="Wischmeyer E."/>
            <person name="Karschin C."/>
            <person name="Daut J."/>
            <person name="Karschin A."/>
        </authorList>
    </citation>
    <scope>NUCLEOTIDE SEQUENCE</scope>
    <source>
        <tissue>Brain</tissue>
    </source>
</reference>
<reference key="2">
    <citation type="submission" date="1998-05" db="EMBL/GenBank/DDBJ databases">
        <authorList>
            <person name="Hirose S."/>
            <person name="Suzuki Y."/>
            <person name="Nakamura N."/>
        </authorList>
    </citation>
    <scope>NUCLEOTIDE SEQUENCE [MRNA]</scope>
    <source>
        <tissue>Kidney</tissue>
    </source>
</reference>
<reference key="3">
    <citation type="journal article" date="2000" name="J. Biol. Chem.">
        <title>Complex structure and regulation of expression of the rat gene for inward rectifier potassium channel Kir7.1.</title>
        <authorList>
            <person name="Nakamura N."/>
            <person name="Suzuki Y."/>
            <person name="Ikeda Y."/>
            <person name="Notoya M."/>
            <person name="Hirose S."/>
        </authorList>
    </citation>
    <scope>NUCLEOTIDE SEQUENCE [GENOMIC DNA]</scope>
    <source>
        <tissue>Liver</tissue>
    </source>
</reference>
<reference key="4">
    <citation type="journal article" date="2000" name="FEBS Lett.">
        <title>Genomic structure and promoter analysis of the rat Kir7.1 potassium channel gene (Kcnj13).</title>
        <authorList>
            <person name="Doering F."/>
            <person name="Karschin A."/>
        </authorList>
    </citation>
    <scope>NUCLEOTIDE SEQUENCE [GENOMIC DNA]</scope>
    <source>
        <tissue>Liver</tissue>
    </source>
</reference>
<organism>
    <name type="scientific">Rattus norvegicus</name>
    <name type="common">Rat</name>
    <dbReference type="NCBI Taxonomy" id="10116"/>
    <lineage>
        <taxon>Eukaryota</taxon>
        <taxon>Metazoa</taxon>
        <taxon>Chordata</taxon>
        <taxon>Craniata</taxon>
        <taxon>Vertebrata</taxon>
        <taxon>Euteleostomi</taxon>
        <taxon>Mammalia</taxon>
        <taxon>Eutheria</taxon>
        <taxon>Euarchontoglires</taxon>
        <taxon>Glires</taxon>
        <taxon>Rodentia</taxon>
        <taxon>Myomorpha</taxon>
        <taxon>Muroidea</taxon>
        <taxon>Muridae</taxon>
        <taxon>Murinae</taxon>
        <taxon>Rattus</taxon>
    </lineage>
</organism>
<keyword id="KW-1003">Cell membrane</keyword>
<keyword id="KW-0407">Ion channel</keyword>
<keyword id="KW-0406">Ion transport</keyword>
<keyword id="KW-0472">Membrane</keyword>
<keyword id="KW-0597">Phosphoprotein</keyword>
<keyword id="KW-0630">Potassium</keyword>
<keyword id="KW-0633">Potassium transport</keyword>
<keyword id="KW-1185">Reference proteome</keyword>
<keyword id="KW-0812">Transmembrane</keyword>
<keyword id="KW-1133">Transmembrane helix</keyword>
<keyword id="KW-0813">Transport</keyword>
<keyword id="KW-0851">Voltage-gated channel</keyword>
<name>KCJ13_RAT</name>
<protein>
    <recommendedName>
        <fullName>Inward rectifier potassium channel 13</fullName>
    </recommendedName>
    <alternativeName>
        <fullName>Inward rectifier K(+) channel Kir7.1</fullName>
    </alternativeName>
    <alternativeName>
        <fullName>Potassium channel, inwardly rectifying subfamily J member 13</fullName>
    </alternativeName>
</protein>
<accession>O70617</accession>
<comment type="function">
    <text evidence="3">Inward rectifier potassium channels are characterized by a greater tendency to allow potassium to flow into the cell rather than out of it. Their voltage dependence is regulated by the concentration of extracellular potassium; as external potassium is raised, the voltage range of the channel opening shifts to more positive voltages. The inward rectification is mainly due to the blockage of outward current by internal magnesium. KCNJ13 has a very low single channel conductance, low sensitivity to block by external barium and cesium, and no dependence of its inward rectification properties on the internal blocking particle magnesium.</text>
</comment>
<comment type="catalytic activity">
    <reaction evidence="3">
        <text>K(+)(in) = K(+)(out)</text>
        <dbReference type="Rhea" id="RHEA:29463"/>
        <dbReference type="ChEBI" id="CHEBI:29103"/>
    </reaction>
</comment>
<comment type="activity regulation">
    <text evidence="3">Inhibited by Ba(2+) and Cs(+), although sensitivity to those inhibitors is much lower than in other Kir channels.</text>
</comment>
<comment type="subunit">
    <text evidence="2 4">Homotetramer. Interacts with RAB28; the interaction may facilitate cone outer segments phagocytosis (By similarity).</text>
</comment>
<comment type="subcellular location">
    <subcellularLocation>
        <location evidence="6">Membrane</location>
        <topology evidence="6">Multi-pass membrane protein</topology>
    </subcellularLocation>
    <subcellularLocation>
        <location evidence="5">Cell membrane</location>
    </subcellularLocation>
    <text evidence="5">Localized at the retinal pigmented epithelium (RPE) apical microvilli.</text>
</comment>
<comment type="PTM">
    <text evidence="1">Phosphorylation at Ser-201 by PKC strongly inhibits ionic currents, while phosphorylation at Ser-287 by PKA increases them.</text>
</comment>
<comment type="similarity">
    <text evidence="7">Belongs to the inward rectifier-type potassium channel (TC 1.A.2.1) family. KCNJ13 subfamily.</text>
</comment>
<gene>
    <name type="primary">Kcnj13</name>
</gene>
<feature type="chain" id="PRO_0000154967" description="Inward rectifier potassium channel 13">
    <location>
        <begin position="1"/>
        <end position="360"/>
    </location>
</feature>
<feature type="topological domain" description="Cytoplasmic" evidence="4">
    <location>
        <begin position="1"/>
        <end position="50"/>
    </location>
</feature>
<feature type="transmembrane region" description="Helical; Name=M1" evidence="4">
    <location>
        <begin position="51"/>
        <end position="77"/>
    </location>
</feature>
<feature type="topological domain" description="Extracellular" evidence="4">
    <location>
        <begin position="78"/>
        <end position="105"/>
    </location>
</feature>
<feature type="intramembrane region" description="Helical; Pore-forming" evidence="4">
    <location>
        <begin position="106"/>
        <end position="122"/>
    </location>
</feature>
<feature type="topological domain" description="Extracellular" evidence="4">
    <location>
        <begin position="123"/>
        <end position="131"/>
    </location>
</feature>
<feature type="transmembrane region" description="Helical; Name=M2" evidence="4">
    <location>
        <begin position="132"/>
        <end position="157"/>
    </location>
</feature>
<feature type="topological domain" description="Cytoplasmic" evidence="4">
    <location>
        <begin position="158"/>
        <end position="360"/>
    </location>
</feature>
<feature type="short sequence motif" description="Selectivity filter" evidence="7">
    <location>
        <begin position="119"/>
        <end position="124"/>
    </location>
</feature>
<feature type="site" description="Role in the control of polyamine-mediated channel gating and in the blocking by intracellular magnesium" evidence="1">
    <location>
        <position position="149"/>
    </location>
</feature>
<feature type="modified residue" description="Phosphoserine; by PKC" evidence="3">
    <location>
        <position position="201"/>
    </location>
</feature>
<feature type="modified residue" description="Phosphoserine; by PKA" evidence="3">
    <location>
        <position position="287"/>
    </location>
</feature>
<evidence type="ECO:0000250" key="1"/>
<evidence type="ECO:0000250" key="2">
    <source>
        <dbReference type="UniProtKB" id="E1BN00"/>
    </source>
</evidence>
<evidence type="ECO:0000250" key="3">
    <source>
        <dbReference type="UniProtKB" id="O60928"/>
    </source>
</evidence>
<evidence type="ECO:0000250" key="4">
    <source>
        <dbReference type="UniProtKB" id="P49655"/>
    </source>
</evidence>
<evidence type="ECO:0000250" key="5">
    <source>
        <dbReference type="UniProtKB" id="P86046"/>
    </source>
</evidence>
<evidence type="ECO:0000255" key="6"/>
<evidence type="ECO:0000305" key="7"/>
<sequence>MDSRNCKVNAPLLSQRYRRMVTKDGHSTLQMDGAQRGLVYLRDAWGILMDMRWRWMMLVFSASFVVHWLVFAVLWYAVAEMNGDLEIDHDVPPENHTICVKHITSFTAAFSFSLETQLTIGYGTMFPSGDCPSAIALLAIQMLLGLMLEAFITGAFVAKIARPKNRAFSIRFTDLAVVAHKDGKPNLIFQVANTRPSPLTSVRVSAVLYQERENGELYQTSVDFHLDGISSEECPFFIFPLTYYHTITPSSPLATLLQHETPSHFELVVFLSAMQEGTGEICQRRTSYLPSEIMLHHRFAALMTRGSKGEYQVKMENFDKTVPEHPTPVVSKSPHRTDLDIHINGQSIDNFQIAETGLTE</sequence>
<proteinExistence type="evidence at transcript level"/>
<dbReference type="EMBL" id="AJ006129">
    <property type="protein sequence ID" value="CAA06879.1"/>
    <property type="molecule type" value="mRNA"/>
</dbReference>
<dbReference type="EMBL" id="AB013890">
    <property type="protein sequence ID" value="BAA28272.1"/>
    <property type="molecule type" value="mRNA"/>
</dbReference>
<dbReference type="EMBL" id="AB034241">
    <property type="protein sequence ID" value="BAA97255.1"/>
    <property type="molecule type" value="Genomic_DNA"/>
</dbReference>
<dbReference type="EMBL" id="AJ292748">
    <property type="protein sequence ID" value="CAC17469.1"/>
    <property type="molecule type" value="Genomic_DNA"/>
</dbReference>
<dbReference type="RefSeq" id="NP_446060.1">
    <property type="nucleotide sequence ID" value="NM_053608.2"/>
</dbReference>
<dbReference type="RefSeq" id="XP_008765523.1">
    <property type="nucleotide sequence ID" value="XM_008767301.2"/>
</dbReference>
<dbReference type="RefSeq" id="XP_063123860.1">
    <property type="nucleotide sequence ID" value="XM_063267790.1"/>
</dbReference>
<dbReference type="RefSeq" id="XP_063123861.1">
    <property type="nucleotide sequence ID" value="XM_063267791.1"/>
</dbReference>
<dbReference type="RefSeq" id="XP_063123863.1">
    <property type="nucleotide sequence ID" value="XM_063267793.1"/>
</dbReference>
<dbReference type="SMR" id="O70617"/>
<dbReference type="FunCoup" id="O70617">
    <property type="interactions" value="78"/>
</dbReference>
<dbReference type="STRING" id="10116.ENSRNOP00000021507"/>
<dbReference type="GlyGen" id="O70617">
    <property type="glycosylation" value="1 site"/>
</dbReference>
<dbReference type="PhosphoSitePlus" id="O70617"/>
<dbReference type="PaxDb" id="10116-ENSRNOP00000021507"/>
<dbReference type="Ensembl" id="ENSRNOT00000021507.4">
    <property type="protein sequence ID" value="ENSRNOP00000021507.2"/>
    <property type="gene ID" value="ENSRNOG00000016057.4"/>
</dbReference>
<dbReference type="GeneID" id="94341"/>
<dbReference type="KEGG" id="rno:94341"/>
<dbReference type="UCSC" id="RGD:621661">
    <property type="organism name" value="rat"/>
</dbReference>
<dbReference type="AGR" id="RGD:621661"/>
<dbReference type="CTD" id="3769"/>
<dbReference type="RGD" id="621661">
    <property type="gene designation" value="Kcnj13"/>
</dbReference>
<dbReference type="eggNOG" id="KOG3827">
    <property type="taxonomic scope" value="Eukaryota"/>
</dbReference>
<dbReference type="GeneTree" id="ENSGT00990000203615"/>
<dbReference type="HOGENOM" id="CLU_022738_3_3_1"/>
<dbReference type="InParanoid" id="O70617"/>
<dbReference type="OMA" id="QGQTCLM"/>
<dbReference type="OrthoDB" id="273257at2759"/>
<dbReference type="PhylomeDB" id="O70617"/>
<dbReference type="TreeFam" id="TF313676"/>
<dbReference type="PRO" id="PR:O70617"/>
<dbReference type="Proteomes" id="UP000002494">
    <property type="component" value="Chromosome 9"/>
</dbReference>
<dbReference type="Bgee" id="ENSRNOG00000016057">
    <property type="expression patterns" value="Expressed in duodenum and 14 other cell types or tissues"/>
</dbReference>
<dbReference type="GO" id="GO:0034702">
    <property type="term" value="C:monoatomic ion channel complex"/>
    <property type="evidence" value="ECO:0007669"/>
    <property type="project" value="UniProtKB-KW"/>
</dbReference>
<dbReference type="GO" id="GO:0005886">
    <property type="term" value="C:plasma membrane"/>
    <property type="evidence" value="ECO:0000318"/>
    <property type="project" value="GO_Central"/>
</dbReference>
<dbReference type="GO" id="GO:0005242">
    <property type="term" value="F:inward rectifier potassium channel activity"/>
    <property type="evidence" value="ECO:0000318"/>
    <property type="project" value="GO_Central"/>
</dbReference>
<dbReference type="GO" id="GO:1990573">
    <property type="term" value="P:potassium ion import across plasma membrane"/>
    <property type="evidence" value="ECO:0000318"/>
    <property type="project" value="GO_Central"/>
</dbReference>
<dbReference type="GO" id="GO:0034765">
    <property type="term" value="P:regulation of monoatomic ion transmembrane transport"/>
    <property type="evidence" value="ECO:0000318"/>
    <property type="project" value="GO_Central"/>
</dbReference>
<dbReference type="FunFam" id="1.10.287.70:FF:000081">
    <property type="entry name" value="inward rectifier potassium channel 13 isoform X1"/>
    <property type="match status" value="1"/>
</dbReference>
<dbReference type="FunFam" id="2.60.40.1400:FF:000004">
    <property type="entry name" value="inward rectifier potassium channel 13 isoform X1"/>
    <property type="match status" value="1"/>
</dbReference>
<dbReference type="Gene3D" id="1.10.287.70">
    <property type="match status" value="1"/>
</dbReference>
<dbReference type="Gene3D" id="2.60.40.1400">
    <property type="entry name" value="G protein-activated inward rectifier potassium channel 1"/>
    <property type="match status" value="1"/>
</dbReference>
<dbReference type="InterPro" id="IPR014756">
    <property type="entry name" value="Ig_E-set"/>
</dbReference>
<dbReference type="InterPro" id="IPR041647">
    <property type="entry name" value="IRK_C"/>
</dbReference>
<dbReference type="InterPro" id="IPR016449">
    <property type="entry name" value="K_chnl_inward-rec_Kir"/>
</dbReference>
<dbReference type="InterPro" id="IPR013518">
    <property type="entry name" value="K_chnl_inward-rec_Kir_cyto"/>
</dbReference>
<dbReference type="InterPro" id="IPR008062">
    <property type="entry name" value="KCNJ13"/>
</dbReference>
<dbReference type="InterPro" id="IPR040445">
    <property type="entry name" value="Kir_TM"/>
</dbReference>
<dbReference type="PANTHER" id="PTHR11767">
    <property type="entry name" value="INWARD RECTIFIER POTASSIUM CHANNEL"/>
    <property type="match status" value="1"/>
</dbReference>
<dbReference type="PANTHER" id="PTHR11767:SF3">
    <property type="entry name" value="INWARD RECTIFIER POTASSIUM CHANNEL 13"/>
    <property type="match status" value="1"/>
</dbReference>
<dbReference type="Pfam" id="PF01007">
    <property type="entry name" value="IRK"/>
    <property type="match status" value="1"/>
</dbReference>
<dbReference type="Pfam" id="PF17655">
    <property type="entry name" value="IRK_C"/>
    <property type="match status" value="1"/>
</dbReference>
<dbReference type="PIRSF" id="PIRSF005465">
    <property type="entry name" value="GIRK_kir"/>
    <property type="match status" value="1"/>
</dbReference>
<dbReference type="PRINTS" id="PR01679">
    <property type="entry name" value="KIR7CHANNEL"/>
</dbReference>
<dbReference type="PRINTS" id="PR01320">
    <property type="entry name" value="KIRCHANNEL"/>
</dbReference>
<dbReference type="SUPFAM" id="SSF81296">
    <property type="entry name" value="E set domains"/>
    <property type="match status" value="1"/>
</dbReference>
<dbReference type="SUPFAM" id="SSF81324">
    <property type="entry name" value="Voltage-gated potassium channels"/>
    <property type="match status" value="1"/>
</dbReference>